<sequence length="1486" mass="170187">MIERGKFRSLTLINWNGFFARTFDLDELVTTLSGGNGAGKSTTMAAFVTALIPDLTLLHFRNTTEAGATSGSRDKGLHGKLKAGVCYSMLDTINSRHQRVVVGVRLQQVAGRDRKVDIKPFAIQGLPMSVQPTQLVTETLNERQARVLPLNELKDKLEAMEGVQFKQFNSITDYHSLMFDLGIIARRLRSASDRSKFYRLIEASLYGGISSAITRSLRDYLLPENSGVRKAFQDMEAALRENRMTLEAIRVTQSDRDLFKHLISEATNYVAADYMRHANERRVHLDKALEFRRELHTSRQQLAAEQYKHVDMARELAEHNGAEGDLEADYQAASDHLNLVQTALRQQEKIERYEADLDELQIRLEEQNEVVAEAIERQEENEARAEAAELEVDELKSQLADYQQALDVQQTRAIQYNQAIAALNRAKELCHLPDLTADCAAEWLETFQAKELEATEKMLSLEQKMSMAQTAHSQFEQAYQLVVAINGPLARNEAWDVARELLREGVDQRHLAEQVQPLRMRLSELEQRLREQQEAERLLADFCKRQGKNFDIDELEALHQELEARIASLSDSVSNAREERMALRQEQEQLQSRIQSLMQRAPVWLAAQNSLNQLSEQCGEEFTSSQDVTEYLQQLLEREREAIVERDEVGARKNAVDEEIERLSQPGGSEDQRLNALAERFGGVLLSEIYDDVSLEDAPYFSALYGPSRHAIVVPDLSQVTEHLEGLTDCPEDLYLIEGDPQSFDDSVFSVDELEKAVVVKIADRQWRYSRFPEVPLFGRAARESRIESLHAEREVLSERFATLSFDVQKTQRLHQAFSRFIGSHLAVAFESDPEAEIRQLNSRRVELERALSNHENDNQQQRIQFEQAKEGVTALNRILPRLNLLADDSLADRVDEIRERLDEAQEAARFVQQFGNQLAKLEPIVSVLQSDPEQFEQLKEDYAYSQQMQRDARQQAFALTEVVQRRAHFSYSDSAEMLSGNSDLNEKLRERLEQAEAERTRAREALRGHAAQLSQYNQVLASLKSSYDTKKELLNDLQRELQDIGVRADSGAEERARIRRDELHAQLSNNRSRRNQLEKALTFCEAEMDNLTRKLRKLERDYFEMREQVVTAKAGWCAVMRMVKDNGVERRLHRRELAYLSADDLRSMSDKALGALRLAVADNEHLRDVLRMSEDPKRPERKIQFFVAVYQHLRERIRQDIIRTDDPVEAIEQMEIELSRLTEELTSREQKLAISSRSVANIIRKTIQREQNRIRMLNQGLQNVSFGQVNSVRLNVNVRETHAMLLDVLSEQHEQHQDLFNSNRLTFSEALAKLYQRLNPQIDMGQRAPQTIGEELLDYRNYLEMEVEVNRGSDGWLRAESGALSTGEAIGTGMSILVMVVQSWEDESRRLRGKDISPCRLLFLDEAARLDARSIATLFELCERLQMQLIIAAPENISPEKGTTYKLVRKVFQNTEHVHVVGLRGFAPQLPETLPGSDEAPSQAS</sequence>
<proteinExistence type="inferred from homology"/>
<keyword id="KW-0067">ATP-binding</keyword>
<keyword id="KW-0131">Cell cycle</keyword>
<keyword id="KW-0132">Cell division</keyword>
<keyword id="KW-0159">Chromosome partition</keyword>
<keyword id="KW-0175">Coiled coil</keyword>
<keyword id="KW-0963">Cytoplasm</keyword>
<keyword id="KW-0226">DNA condensation</keyword>
<keyword id="KW-0238">DNA-binding</keyword>
<keyword id="KW-0547">Nucleotide-binding</keyword>
<keyword id="KW-1185">Reference proteome</keyword>
<protein>
    <recommendedName>
        <fullName evidence="1">Chromosome partition protein MukB</fullName>
    </recommendedName>
    <alternativeName>
        <fullName evidence="1">Structural maintenance of chromosome-related protein</fullName>
    </alternativeName>
</protein>
<name>MUKB_ECO24</name>
<reference key="1">
    <citation type="journal article" date="2008" name="J. Bacteriol.">
        <title>The pangenome structure of Escherichia coli: comparative genomic analysis of E. coli commensal and pathogenic isolates.</title>
        <authorList>
            <person name="Rasko D.A."/>
            <person name="Rosovitz M.J."/>
            <person name="Myers G.S.A."/>
            <person name="Mongodin E.F."/>
            <person name="Fricke W.F."/>
            <person name="Gajer P."/>
            <person name="Crabtree J."/>
            <person name="Sebaihia M."/>
            <person name="Thomson N.R."/>
            <person name="Chaudhuri R."/>
            <person name="Henderson I.R."/>
            <person name="Sperandio V."/>
            <person name="Ravel J."/>
        </authorList>
    </citation>
    <scope>NUCLEOTIDE SEQUENCE [LARGE SCALE GENOMIC DNA]</scope>
    <source>
        <strain>E24377A / ETEC</strain>
    </source>
</reference>
<accession>A7ZK14</accession>
<gene>
    <name evidence="1" type="primary">mukB</name>
    <name type="ordered locus">EcE24377A_1023</name>
</gene>
<evidence type="ECO:0000255" key="1">
    <source>
        <dbReference type="HAMAP-Rule" id="MF_01800"/>
    </source>
</evidence>
<comment type="function">
    <text evidence="1">Plays a central role in chromosome condensation, segregation and cell cycle progression. Functions as a homodimer, which is essential for chromosome partition. Involved in negative DNA supercoiling in vivo, and by this means organize and compact chromosomes. May achieve or facilitate chromosome segregation by condensation DNA from both sides of a centrally located replisome during cell division.</text>
</comment>
<comment type="subunit">
    <text evidence="1">Homodimerization via its hinge domain. Binds to DNA via its C-terminal region. Interacts, and probably forms a ternary complex, with MukE and MukF via its C-terminal region. The complex formation is stimulated by calcium or magnesium. Interacts with tubulin-related protein FtsZ.</text>
</comment>
<comment type="subcellular location">
    <subcellularLocation>
        <location evidence="1">Cytoplasm</location>
        <location evidence="1">Nucleoid</location>
    </subcellularLocation>
    <text evidence="1">Restricted to the nucleoid region.</text>
</comment>
<comment type="domain">
    <text evidence="1">The hinge domain, which separates the large intramolecular coiled coil regions, allows the homodimerization, forming a V-shaped homodimer.</text>
</comment>
<comment type="similarity">
    <text evidence="1">Belongs to the SMC family. MukB subfamily.</text>
</comment>
<organism>
    <name type="scientific">Escherichia coli O139:H28 (strain E24377A / ETEC)</name>
    <dbReference type="NCBI Taxonomy" id="331111"/>
    <lineage>
        <taxon>Bacteria</taxon>
        <taxon>Pseudomonadati</taxon>
        <taxon>Pseudomonadota</taxon>
        <taxon>Gammaproteobacteria</taxon>
        <taxon>Enterobacterales</taxon>
        <taxon>Enterobacteriaceae</taxon>
        <taxon>Escherichia</taxon>
    </lineage>
</organism>
<dbReference type="EMBL" id="CP000800">
    <property type="protein sequence ID" value="ABV20768.1"/>
    <property type="molecule type" value="Genomic_DNA"/>
</dbReference>
<dbReference type="RefSeq" id="WP_000572634.1">
    <property type="nucleotide sequence ID" value="NC_009801.1"/>
</dbReference>
<dbReference type="SMR" id="A7ZK14"/>
<dbReference type="GeneID" id="75205326"/>
<dbReference type="KEGG" id="ecw:EcE24377A_1023"/>
<dbReference type="HOGENOM" id="CLU_004430_0_0_6"/>
<dbReference type="Proteomes" id="UP000001122">
    <property type="component" value="Chromosome"/>
</dbReference>
<dbReference type="GO" id="GO:0005737">
    <property type="term" value="C:cytoplasm"/>
    <property type="evidence" value="ECO:0007669"/>
    <property type="project" value="UniProtKB-UniRule"/>
</dbReference>
<dbReference type="GO" id="GO:0009295">
    <property type="term" value="C:nucleoid"/>
    <property type="evidence" value="ECO:0007669"/>
    <property type="project" value="UniProtKB-SubCell"/>
</dbReference>
<dbReference type="GO" id="GO:0005524">
    <property type="term" value="F:ATP binding"/>
    <property type="evidence" value="ECO:0007669"/>
    <property type="project" value="UniProtKB-UniRule"/>
</dbReference>
<dbReference type="GO" id="GO:0003677">
    <property type="term" value="F:DNA binding"/>
    <property type="evidence" value="ECO:0007669"/>
    <property type="project" value="UniProtKB-UniRule"/>
</dbReference>
<dbReference type="GO" id="GO:0051301">
    <property type="term" value="P:cell division"/>
    <property type="evidence" value="ECO:0007669"/>
    <property type="project" value="UniProtKB-KW"/>
</dbReference>
<dbReference type="GO" id="GO:0030261">
    <property type="term" value="P:chromosome condensation"/>
    <property type="evidence" value="ECO:0007669"/>
    <property type="project" value="UniProtKB-KW"/>
</dbReference>
<dbReference type="GO" id="GO:0007059">
    <property type="term" value="P:chromosome segregation"/>
    <property type="evidence" value="ECO:0007669"/>
    <property type="project" value="UniProtKB-UniRule"/>
</dbReference>
<dbReference type="GO" id="GO:0006260">
    <property type="term" value="P:DNA replication"/>
    <property type="evidence" value="ECO:0007669"/>
    <property type="project" value="UniProtKB-UniRule"/>
</dbReference>
<dbReference type="FunFam" id="1.20.58.850:FF:000001">
    <property type="entry name" value="Chromosome partition protein MukB"/>
    <property type="match status" value="1"/>
</dbReference>
<dbReference type="FunFam" id="3.30.70.3500:FF:000001">
    <property type="entry name" value="Chromosome partition protein MukB"/>
    <property type="match status" value="1"/>
</dbReference>
<dbReference type="FunFam" id="3.40.1140.10:FF:000001">
    <property type="entry name" value="Chromosome partition protein MukB"/>
    <property type="match status" value="1"/>
</dbReference>
<dbReference type="FunFam" id="3.40.1140.10:FF:000002">
    <property type="entry name" value="Chromosome partition protein MukB"/>
    <property type="match status" value="1"/>
</dbReference>
<dbReference type="Gene3D" id="1.20.58.850">
    <property type="match status" value="1"/>
</dbReference>
<dbReference type="Gene3D" id="3.40.1140.10">
    <property type="match status" value="2"/>
</dbReference>
<dbReference type="Gene3D" id="1.20.5.420">
    <property type="entry name" value="Immunoglobulin FC, subunit C"/>
    <property type="match status" value="1"/>
</dbReference>
<dbReference type="Gene3D" id="3.30.70.3500">
    <property type="entry name" value="MukB, hinge domain"/>
    <property type="match status" value="1"/>
</dbReference>
<dbReference type="HAMAP" id="MF_01800">
    <property type="entry name" value="MukB"/>
    <property type="match status" value="1"/>
</dbReference>
<dbReference type="InterPro" id="IPR012090">
    <property type="entry name" value="MukB"/>
</dbReference>
<dbReference type="InterPro" id="IPR050308">
    <property type="entry name" value="MukB/SMC"/>
</dbReference>
<dbReference type="InterPro" id="IPR032520">
    <property type="entry name" value="MukB_hinge"/>
</dbReference>
<dbReference type="InterPro" id="IPR042501">
    <property type="entry name" value="MukB_hinge_sf"/>
</dbReference>
<dbReference type="InterPro" id="IPR007406">
    <property type="entry name" value="MukB_N_dom"/>
</dbReference>
<dbReference type="InterPro" id="IPR027417">
    <property type="entry name" value="P-loop_NTPase"/>
</dbReference>
<dbReference type="NCBIfam" id="NF003422">
    <property type="entry name" value="PRK04863.1"/>
    <property type="match status" value="1"/>
</dbReference>
<dbReference type="PANTHER" id="PTHR42963">
    <property type="entry name" value="CHROMOSOME PARTITION PROTEIN MUKB"/>
    <property type="match status" value="1"/>
</dbReference>
<dbReference type="PANTHER" id="PTHR42963:SF1">
    <property type="entry name" value="DUF4476 DOMAIN-CONTAINING PROTEIN"/>
    <property type="match status" value="1"/>
</dbReference>
<dbReference type="Pfam" id="PF04310">
    <property type="entry name" value="MukB"/>
    <property type="match status" value="1"/>
</dbReference>
<dbReference type="Pfam" id="PF16330">
    <property type="entry name" value="MukB_hinge"/>
    <property type="match status" value="1"/>
</dbReference>
<dbReference type="Pfam" id="PF13558">
    <property type="entry name" value="SbcC_Walker_B"/>
    <property type="match status" value="1"/>
</dbReference>
<dbReference type="PIRSF" id="PIRSF005246">
    <property type="entry name" value="MukB"/>
    <property type="match status" value="1"/>
</dbReference>
<dbReference type="SUPFAM" id="SSF52540">
    <property type="entry name" value="P-loop containing nucleoside triphosphate hydrolases"/>
    <property type="match status" value="2"/>
</dbReference>
<feature type="chain" id="PRO_1000069901" description="Chromosome partition protein MukB">
    <location>
        <begin position="1"/>
        <end position="1486"/>
    </location>
</feature>
<feature type="region of interest" description="Flexible hinge" evidence="1">
    <location>
        <begin position="666"/>
        <end position="783"/>
    </location>
</feature>
<feature type="coiled-coil region" evidence="1">
    <location>
        <begin position="326"/>
        <end position="418"/>
    </location>
</feature>
<feature type="coiled-coil region" evidence="1">
    <location>
        <begin position="444"/>
        <end position="480"/>
    </location>
</feature>
<feature type="coiled-coil region" evidence="1">
    <location>
        <begin position="509"/>
        <end position="603"/>
    </location>
</feature>
<feature type="coiled-coil region" evidence="1">
    <location>
        <begin position="835"/>
        <end position="923"/>
    </location>
</feature>
<feature type="coiled-coil region" evidence="1">
    <location>
        <begin position="977"/>
        <end position="1115"/>
    </location>
</feature>
<feature type="coiled-coil region" evidence="1">
    <location>
        <begin position="1209"/>
        <end position="1266"/>
    </location>
</feature>
<feature type="binding site" evidence="1">
    <location>
        <begin position="34"/>
        <end position="41"/>
    </location>
    <ligand>
        <name>ATP</name>
        <dbReference type="ChEBI" id="CHEBI:30616"/>
    </ligand>
</feature>